<dbReference type="EMBL" id="BA000033">
    <property type="protein sequence ID" value="BAB95184.1"/>
    <property type="molecule type" value="Genomic_DNA"/>
</dbReference>
<dbReference type="RefSeq" id="WP_000404645.1">
    <property type="nucleotide sequence ID" value="NC_003923.1"/>
</dbReference>
<dbReference type="SMR" id="Q7A0W1"/>
<dbReference type="KEGG" id="sam:MW1319"/>
<dbReference type="HOGENOM" id="CLU_733295_0_0_9"/>
<dbReference type="GO" id="GO:0016491">
    <property type="term" value="F:oxidoreductase activity"/>
    <property type="evidence" value="ECO:0007669"/>
    <property type="project" value="TreeGrafter"/>
</dbReference>
<dbReference type="Gene3D" id="1.25.10.10">
    <property type="entry name" value="Leucine-rich Repeat Variant"/>
    <property type="match status" value="1"/>
</dbReference>
<dbReference type="Gene3D" id="3.30.1370.70">
    <property type="entry name" value="Scaffold protein Nfu/NifU, N-terminal domain"/>
    <property type="match status" value="1"/>
</dbReference>
<dbReference type="InterPro" id="IPR011989">
    <property type="entry name" value="ARM-like"/>
</dbReference>
<dbReference type="InterPro" id="IPR016024">
    <property type="entry name" value="ARM-type_fold"/>
</dbReference>
<dbReference type="InterPro" id="IPR014824">
    <property type="entry name" value="Nfu/NifU_N"/>
</dbReference>
<dbReference type="InterPro" id="IPR036498">
    <property type="entry name" value="Nfu/NifU_N_sf"/>
</dbReference>
<dbReference type="InterPro" id="IPR004155">
    <property type="entry name" value="PBS_lyase_HEAT"/>
</dbReference>
<dbReference type="InterPro" id="IPR025989">
    <property type="entry name" value="Virulence_F_dom"/>
</dbReference>
<dbReference type="PANTHER" id="PTHR12697:SF37">
    <property type="entry name" value="CONSERVED VIRULENCE FACTOR C"/>
    <property type="match status" value="1"/>
</dbReference>
<dbReference type="PANTHER" id="PTHR12697">
    <property type="entry name" value="PBS LYASE HEAT-LIKE PROTEIN"/>
    <property type="match status" value="1"/>
</dbReference>
<dbReference type="Pfam" id="PF13646">
    <property type="entry name" value="HEAT_2"/>
    <property type="match status" value="1"/>
</dbReference>
<dbReference type="Pfam" id="PF08712">
    <property type="entry name" value="Nfu_N"/>
    <property type="match status" value="1"/>
</dbReference>
<dbReference type="Pfam" id="PF13769">
    <property type="entry name" value="Virulence_fact"/>
    <property type="match status" value="1"/>
</dbReference>
<dbReference type="SMART" id="SM00567">
    <property type="entry name" value="EZ_HEAT"/>
    <property type="match status" value="3"/>
</dbReference>
<dbReference type="SMART" id="SM00932">
    <property type="entry name" value="Nfu_N"/>
    <property type="match status" value="1"/>
</dbReference>
<dbReference type="SUPFAM" id="SSF48371">
    <property type="entry name" value="ARM repeat"/>
    <property type="match status" value="1"/>
</dbReference>
<dbReference type="SUPFAM" id="SSF110836">
    <property type="entry name" value="Hypothetical protein SAV1430"/>
    <property type="match status" value="1"/>
</dbReference>
<protein>
    <recommendedName>
        <fullName>Conserved virulence factor C</fullName>
    </recommendedName>
</protein>
<name>CVFC_STAAW</name>
<keyword id="KW-0843">Virulence</keyword>
<organism>
    <name type="scientific">Staphylococcus aureus (strain MW2)</name>
    <dbReference type="NCBI Taxonomy" id="196620"/>
    <lineage>
        <taxon>Bacteria</taxon>
        <taxon>Bacillati</taxon>
        <taxon>Bacillota</taxon>
        <taxon>Bacilli</taxon>
        <taxon>Bacillales</taxon>
        <taxon>Staphylococcaceae</taxon>
        <taxon>Staphylococcus</taxon>
    </lineage>
</organism>
<feature type="chain" id="PRO_0000282307" description="Conserved virulence factor C">
    <location>
        <begin position="1"/>
        <end position="374"/>
    </location>
</feature>
<proteinExistence type="inferred from homology"/>
<comment type="function">
    <text evidence="1">Required for hemolysin production.</text>
</comment>
<comment type="similarity">
    <text evidence="2">Belongs to the CvfC family.</text>
</comment>
<reference key="1">
    <citation type="journal article" date="2002" name="Lancet">
        <title>Genome and virulence determinants of high virulence community-acquired MRSA.</title>
        <authorList>
            <person name="Baba T."/>
            <person name="Takeuchi F."/>
            <person name="Kuroda M."/>
            <person name="Yuzawa H."/>
            <person name="Aoki K."/>
            <person name="Oguchi A."/>
            <person name="Nagai Y."/>
            <person name="Iwama N."/>
            <person name="Asano K."/>
            <person name="Naimi T."/>
            <person name="Kuroda H."/>
            <person name="Cui L."/>
            <person name="Yamamoto K."/>
            <person name="Hiramatsu K."/>
        </authorList>
    </citation>
    <scope>NUCLEOTIDE SEQUENCE [LARGE SCALE GENOMIC DNA]</scope>
    <source>
        <strain>MW2</strain>
    </source>
</reference>
<gene>
    <name type="primary">cvfC</name>
    <name type="ordered locus">MW1319</name>
</gene>
<evidence type="ECO:0000250" key="1"/>
<evidence type="ECO:0000305" key="2"/>
<accession>Q7A0W1</accession>
<sequence>MEILRIEPTPSPNTMKVVLSYTREDKLSNTYKKVEETQPRFINQLLSIDGITSIFHVMNFLAVDKAPKADWEVILPDIKAAFSDANKVLESVNEPQIDNHFGEIKAELLTFKGIPYQIKLTSADQELREQLPQTYVDHMTQAQTAHDNIVFMRKWLDLGNRYGNIEEVMDGVLEEVLATYPESQLPVLVKHALEENHATNNYHFYRHVSLDEYHATDNWKTRLRMLNHFPKPTFEDIPLLDLALSDEKVPVRRQAIVLLGMIESKEILPYLYKGLRDKSPAVRRTAGDCISDLGYPEALPEMVLLLDDPQKIVRWRAAMFIFDEGNAEQLPALKAHINDNAFEVKLQIEMAISRIENGDEALGSVWKQMANRTI</sequence>